<name>ERA_BRASO</name>
<protein>
    <recommendedName>
        <fullName evidence="1">GTPase Era</fullName>
    </recommendedName>
</protein>
<sequence length="307" mass="33717">MTAEQQAGQGATRCGFVALIGAPNVGKSTLVNALVGSKVTIVSRKVQTTRALIRGIVIEGQSQIILVDTPGIFSPKRRLDRAMVTTAWSGAHDADLVCVLLDAKKGLDDEAQAIIDKAASVAHEKILVVNKVDLVPREKLLALVAAANEKLAFARTFMISALSGDGVDDLRRALAEMVPPGPFHYPEDQMSDAPMRHLAAEITREKIYSHLHQELPYQSTVETDSWTERNDGSIRIEQTIFVERDSQRKIVLGKGGATIKSIGAQSRKEIAEITGVPVHLFLFVKVRENWGDDPDRYREMGLEFPRE</sequence>
<keyword id="KW-0997">Cell inner membrane</keyword>
<keyword id="KW-1003">Cell membrane</keyword>
<keyword id="KW-0963">Cytoplasm</keyword>
<keyword id="KW-0342">GTP-binding</keyword>
<keyword id="KW-0472">Membrane</keyword>
<keyword id="KW-0547">Nucleotide-binding</keyword>
<keyword id="KW-1185">Reference proteome</keyword>
<keyword id="KW-0690">Ribosome biogenesis</keyword>
<keyword id="KW-0694">RNA-binding</keyword>
<keyword id="KW-0699">rRNA-binding</keyword>
<feature type="chain" id="PRO_1000079660" description="GTPase Era">
    <location>
        <begin position="1"/>
        <end position="307"/>
    </location>
</feature>
<feature type="domain" description="Era-type G" evidence="2">
    <location>
        <begin position="13"/>
        <end position="180"/>
    </location>
</feature>
<feature type="domain" description="KH type-2" evidence="1">
    <location>
        <begin position="211"/>
        <end position="288"/>
    </location>
</feature>
<feature type="region of interest" description="G1" evidence="2">
    <location>
        <begin position="21"/>
        <end position="28"/>
    </location>
</feature>
<feature type="region of interest" description="G2" evidence="2">
    <location>
        <begin position="47"/>
        <end position="51"/>
    </location>
</feature>
<feature type="region of interest" description="G3" evidence="2">
    <location>
        <begin position="68"/>
        <end position="71"/>
    </location>
</feature>
<feature type="region of interest" description="G4" evidence="2">
    <location>
        <begin position="130"/>
        <end position="133"/>
    </location>
</feature>
<feature type="region of interest" description="G5" evidence="2">
    <location>
        <begin position="159"/>
        <end position="161"/>
    </location>
</feature>
<feature type="binding site" evidence="1">
    <location>
        <begin position="21"/>
        <end position="28"/>
    </location>
    <ligand>
        <name>GTP</name>
        <dbReference type="ChEBI" id="CHEBI:37565"/>
    </ligand>
</feature>
<feature type="binding site" evidence="1">
    <location>
        <begin position="68"/>
        <end position="72"/>
    </location>
    <ligand>
        <name>GTP</name>
        <dbReference type="ChEBI" id="CHEBI:37565"/>
    </ligand>
</feature>
<feature type="binding site" evidence="1">
    <location>
        <begin position="130"/>
        <end position="133"/>
    </location>
    <ligand>
        <name>GTP</name>
        <dbReference type="ChEBI" id="CHEBI:37565"/>
    </ligand>
</feature>
<evidence type="ECO:0000255" key="1">
    <source>
        <dbReference type="HAMAP-Rule" id="MF_00367"/>
    </source>
</evidence>
<evidence type="ECO:0000255" key="2">
    <source>
        <dbReference type="PROSITE-ProRule" id="PRU01050"/>
    </source>
</evidence>
<dbReference type="EMBL" id="CU234118">
    <property type="protein sequence ID" value="CAL78203.1"/>
    <property type="molecule type" value="Genomic_DNA"/>
</dbReference>
<dbReference type="RefSeq" id="WP_011927317.1">
    <property type="nucleotide sequence ID" value="NC_009445.1"/>
</dbReference>
<dbReference type="SMR" id="A4YWC7"/>
<dbReference type="STRING" id="114615.BRADO4462"/>
<dbReference type="KEGG" id="bra:BRADO4462"/>
<dbReference type="eggNOG" id="COG1159">
    <property type="taxonomic scope" value="Bacteria"/>
</dbReference>
<dbReference type="HOGENOM" id="CLU_038009_1_1_5"/>
<dbReference type="OrthoDB" id="9805918at2"/>
<dbReference type="Proteomes" id="UP000001994">
    <property type="component" value="Chromosome"/>
</dbReference>
<dbReference type="GO" id="GO:0005829">
    <property type="term" value="C:cytosol"/>
    <property type="evidence" value="ECO:0007669"/>
    <property type="project" value="TreeGrafter"/>
</dbReference>
<dbReference type="GO" id="GO:0005886">
    <property type="term" value="C:plasma membrane"/>
    <property type="evidence" value="ECO:0007669"/>
    <property type="project" value="UniProtKB-SubCell"/>
</dbReference>
<dbReference type="GO" id="GO:0005525">
    <property type="term" value="F:GTP binding"/>
    <property type="evidence" value="ECO:0007669"/>
    <property type="project" value="UniProtKB-UniRule"/>
</dbReference>
<dbReference type="GO" id="GO:0003924">
    <property type="term" value="F:GTPase activity"/>
    <property type="evidence" value="ECO:0007669"/>
    <property type="project" value="UniProtKB-UniRule"/>
</dbReference>
<dbReference type="GO" id="GO:0043024">
    <property type="term" value="F:ribosomal small subunit binding"/>
    <property type="evidence" value="ECO:0007669"/>
    <property type="project" value="TreeGrafter"/>
</dbReference>
<dbReference type="GO" id="GO:0070181">
    <property type="term" value="F:small ribosomal subunit rRNA binding"/>
    <property type="evidence" value="ECO:0007669"/>
    <property type="project" value="UniProtKB-UniRule"/>
</dbReference>
<dbReference type="GO" id="GO:0000028">
    <property type="term" value="P:ribosomal small subunit assembly"/>
    <property type="evidence" value="ECO:0007669"/>
    <property type="project" value="TreeGrafter"/>
</dbReference>
<dbReference type="CDD" id="cd04163">
    <property type="entry name" value="Era"/>
    <property type="match status" value="1"/>
</dbReference>
<dbReference type="CDD" id="cd22534">
    <property type="entry name" value="KH-II_Era"/>
    <property type="match status" value="1"/>
</dbReference>
<dbReference type="FunFam" id="3.40.50.300:FF:001190">
    <property type="entry name" value="GTP-binding protein ERG"/>
    <property type="match status" value="1"/>
</dbReference>
<dbReference type="FunFam" id="3.30.300.20:FF:000031">
    <property type="entry name" value="GTPase Era"/>
    <property type="match status" value="1"/>
</dbReference>
<dbReference type="Gene3D" id="3.30.300.20">
    <property type="match status" value="1"/>
</dbReference>
<dbReference type="Gene3D" id="3.40.50.300">
    <property type="entry name" value="P-loop containing nucleotide triphosphate hydrolases"/>
    <property type="match status" value="1"/>
</dbReference>
<dbReference type="HAMAP" id="MF_00367">
    <property type="entry name" value="GTPase_Era"/>
    <property type="match status" value="1"/>
</dbReference>
<dbReference type="InterPro" id="IPR030388">
    <property type="entry name" value="G_ERA_dom"/>
</dbReference>
<dbReference type="InterPro" id="IPR006073">
    <property type="entry name" value="GTP-bd"/>
</dbReference>
<dbReference type="InterPro" id="IPR005662">
    <property type="entry name" value="GTPase_Era-like"/>
</dbReference>
<dbReference type="InterPro" id="IPR015946">
    <property type="entry name" value="KH_dom-like_a/b"/>
</dbReference>
<dbReference type="InterPro" id="IPR004044">
    <property type="entry name" value="KH_dom_type_2"/>
</dbReference>
<dbReference type="InterPro" id="IPR009019">
    <property type="entry name" value="KH_sf_prok-type"/>
</dbReference>
<dbReference type="InterPro" id="IPR027417">
    <property type="entry name" value="P-loop_NTPase"/>
</dbReference>
<dbReference type="InterPro" id="IPR005225">
    <property type="entry name" value="Small_GTP-bd"/>
</dbReference>
<dbReference type="NCBIfam" id="TIGR00436">
    <property type="entry name" value="era"/>
    <property type="match status" value="1"/>
</dbReference>
<dbReference type="NCBIfam" id="NF000908">
    <property type="entry name" value="PRK00089.1"/>
    <property type="match status" value="1"/>
</dbReference>
<dbReference type="NCBIfam" id="TIGR00231">
    <property type="entry name" value="small_GTP"/>
    <property type="match status" value="1"/>
</dbReference>
<dbReference type="PANTHER" id="PTHR42698">
    <property type="entry name" value="GTPASE ERA"/>
    <property type="match status" value="1"/>
</dbReference>
<dbReference type="PANTHER" id="PTHR42698:SF1">
    <property type="entry name" value="GTPASE ERA, MITOCHONDRIAL"/>
    <property type="match status" value="1"/>
</dbReference>
<dbReference type="Pfam" id="PF07650">
    <property type="entry name" value="KH_2"/>
    <property type="match status" value="1"/>
</dbReference>
<dbReference type="Pfam" id="PF01926">
    <property type="entry name" value="MMR_HSR1"/>
    <property type="match status" value="1"/>
</dbReference>
<dbReference type="SUPFAM" id="SSF52540">
    <property type="entry name" value="P-loop containing nucleoside triphosphate hydrolases"/>
    <property type="match status" value="1"/>
</dbReference>
<dbReference type="SUPFAM" id="SSF54814">
    <property type="entry name" value="Prokaryotic type KH domain (KH-domain type II)"/>
    <property type="match status" value="1"/>
</dbReference>
<dbReference type="PROSITE" id="PS51713">
    <property type="entry name" value="G_ERA"/>
    <property type="match status" value="1"/>
</dbReference>
<dbReference type="PROSITE" id="PS50823">
    <property type="entry name" value="KH_TYPE_2"/>
    <property type="match status" value="1"/>
</dbReference>
<organism>
    <name type="scientific">Bradyrhizobium sp. (strain ORS 278)</name>
    <dbReference type="NCBI Taxonomy" id="114615"/>
    <lineage>
        <taxon>Bacteria</taxon>
        <taxon>Pseudomonadati</taxon>
        <taxon>Pseudomonadota</taxon>
        <taxon>Alphaproteobacteria</taxon>
        <taxon>Hyphomicrobiales</taxon>
        <taxon>Nitrobacteraceae</taxon>
        <taxon>Bradyrhizobium</taxon>
    </lineage>
</organism>
<proteinExistence type="inferred from homology"/>
<comment type="function">
    <text evidence="1">An essential GTPase that binds both GDP and GTP, with rapid nucleotide exchange. Plays a role in 16S rRNA processing and 30S ribosomal subunit biogenesis and possibly also in cell cycle regulation and energy metabolism.</text>
</comment>
<comment type="subunit">
    <text evidence="1">Monomer.</text>
</comment>
<comment type="subcellular location">
    <subcellularLocation>
        <location>Cytoplasm</location>
    </subcellularLocation>
    <subcellularLocation>
        <location evidence="1">Cell inner membrane</location>
        <topology evidence="1">Peripheral membrane protein</topology>
    </subcellularLocation>
</comment>
<comment type="similarity">
    <text evidence="1 2">Belongs to the TRAFAC class TrmE-Era-EngA-EngB-Septin-like GTPase superfamily. Era GTPase family.</text>
</comment>
<reference key="1">
    <citation type="journal article" date="2007" name="Science">
        <title>Legumes symbioses: absence of nod genes in photosynthetic bradyrhizobia.</title>
        <authorList>
            <person name="Giraud E."/>
            <person name="Moulin L."/>
            <person name="Vallenet D."/>
            <person name="Barbe V."/>
            <person name="Cytryn E."/>
            <person name="Avarre J.-C."/>
            <person name="Jaubert M."/>
            <person name="Simon D."/>
            <person name="Cartieaux F."/>
            <person name="Prin Y."/>
            <person name="Bena G."/>
            <person name="Hannibal L."/>
            <person name="Fardoux J."/>
            <person name="Kojadinovic M."/>
            <person name="Vuillet L."/>
            <person name="Lajus A."/>
            <person name="Cruveiller S."/>
            <person name="Rouy Z."/>
            <person name="Mangenot S."/>
            <person name="Segurens B."/>
            <person name="Dossat C."/>
            <person name="Franck W.L."/>
            <person name="Chang W.-S."/>
            <person name="Saunders E."/>
            <person name="Bruce D."/>
            <person name="Richardson P."/>
            <person name="Normand P."/>
            <person name="Dreyfus B."/>
            <person name="Pignol D."/>
            <person name="Stacey G."/>
            <person name="Emerich D."/>
            <person name="Vermeglio A."/>
            <person name="Medigue C."/>
            <person name="Sadowsky M."/>
        </authorList>
    </citation>
    <scope>NUCLEOTIDE SEQUENCE [LARGE SCALE GENOMIC DNA]</scope>
    <source>
        <strain>ORS 278</strain>
    </source>
</reference>
<gene>
    <name evidence="1" type="primary">era</name>
    <name type="ordered locus">BRADO4462</name>
</gene>
<accession>A4YWC7</accession>